<comment type="function">
    <text evidence="1">Involved in the regulation of the intracellular balance of NAD and NADP, and is a key enzyme in the biosynthesis of NADP. Catalyzes specifically the phosphorylation on 2'-hydroxyl of the adenosine moiety of NAD to yield NADP.</text>
</comment>
<comment type="catalytic activity">
    <reaction evidence="1">
        <text>NAD(+) + ATP = ADP + NADP(+) + H(+)</text>
        <dbReference type="Rhea" id="RHEA:18629"/>
        <dbReference type="ChEBI" id="CHEBI:15378"/>
        <dbReference type="ChEBI" id="CHEBI:30616"/>
        <dbReference type="ChEBI" id="CHEBI:57540"/>
        <dbReference type="ChEBI" id="CHEBI:58349"/>
        <dbReference type="ChEBI" id="CHEBI:456216"/>
        <dbReference type="EC" id="2.7.1.23"/>
    </reaction>
</comment>
<comment type="cofactor">
    <cofactor evidence="1">
        <name>a divalent metal cation</name>
        <dbReference type="ChEBI" id="CHEBI:60240"/>
    </cofactor>
</comment>
<comment type="subcellular location">
    <subcellularLocation>
        <location evidence="1">Cytoplasm</location>
    </subcellularLocation>
</comment>
<comment type="similarity">
    <text evidence="1">Belongs to the NAD kinase family.</text>
</comment>
<reference key="1">
    <citation type="submission" date="2005-03" db="EMBL/GenBank/DDBJ databases">
        <title>Comparison of the complete genome sequences of Rhodococcus erythropolis PR4 and Rhodococcus opacus B4.</title>
        <authorList>
            <person name="Takarada H."/>
            <person name="Sekine M."/>
            <person name="Hosoyama A."/>
            <person name="Yamada R."/>
            <person name="Fujisawa T."/>
            <person name="Omata S."/>
            <person name="Shimizu A."/>
            <person name="Tsukatani N."/>
            <person name="Tanikawa S."/>
            <person name="Fujita N."/>
            <person name="Harayama S."/>
        </authorList>
    </citation>
    <scope>NUCLEOTIDE SEQUENCE [LARGE SCALE GENOMIC DNA]</scope>
    <source>
        <strain>PR4 / NBRC 100887</strain>
    </source>
</reference>
<proteinExistence type="inferred from homology"/>
<protein>
    <recommendedName>
        <fullName evidence="1">NAD kinase</fullName>
        <ecNumber evidence="1">2.7.1.23</ecNumber>
    </recommendedName>
    <alternativeName>
        <fullName evidence="1">ATP-dependent NAD kinase</fullName>
    </alternativeName>
</protein>
<sequence>MNAVTNGESREILLVAHPGRRDITETAKRVGKIFERAGIGLRVLVDEADSSRIEAMTEPEGFSAPGLDVTVVHPGPDAAVGCELVLVLGGDGTFLRAAELAQEASIPVLGINLGRIGFLAETEAEHLDEALAQVVRKEYRVESRMTLDVVIRVDDEIIDRGWALNEASIENRSRLGVLEVVLEVDGRPVSAFGCDGVLVSTPTGSTAYAFSAGGPVVWPELEALLVVPSNAHALFARPLVTSPNSIIAVETVAGSHDGLVFCDGRRTLELPAGARVEIVRGATPVKWVRLDSAPFADRMVRKFELPVTGWRGRKP</sequence>
<name>NADK_RHOE4</name>
<evidence type="ECO:0000255" key="1">
    <source>
        <dbReference type="HAMAP-Rule" id="MF_00361"/>
    </source>
</evidence>
<feature type="chain" id="PRO_1000205422" description="NAD kinase">
    <location>
        <begin position="1"/>
        <end position="315"/>
    </location>
</feature>
<feature type="active site" description="Proton acceptor" evidence="1">
    <location>
        <position position="91"/>
    </location>
</feature>
<feature type="binding site" evidence="1">
    <location>
        <begin position="91"/>
        <end position="92"/>
    </location>
    <ligand>
        <name>NAD(+)</name>
        <dbReference type="ChEBI" id="CHEBI:57540"/>
    </ligand>
</feature>
<feature type="binding site" evidence="1">
    <location>
        <position position="96"/>
    </location>
    <ligand>
        <name>NAD(+)</name>
        <dbReference type="ChEBI" id="CHEBI:57540"/>
    </ligand>
</feature>
<feature type="binding site" evidence="1">
    <location>
        <begin position="165"/>
        <end position="166"/>
    </location>
    <ligand>
        <name>NAD(+)</name>
        <dbReference type="ChEBI" id="CHEBI:57540"/>
    </ligand>
</feature>
<feature type="binding site" evidence="1">
    <location>
        <position position="195"/>
    </location>
    <ligand>
        <name>NAD(+)</name>
        <dbReference type="ChEBI" id="CHEBI:57540"/>
    </ligand>
</feature>
<feature type="binding site" evidence="1">
    <location>
        <begin position="206"/>
        <end position="211"/>
    </location>
    <ligand>
        <name>NAD(+)</name>
        <dbReference type="ChEBI" id="CHEBI:57540"/>
    </ligand>
</feature>
<dbReference type="EC" id="2.7.1.23" evidence="1"/>
<dbReference type="EMBL" id="AP008957">
    <property type="protein sequence ID" value="BAH33974.1"/>
    <property type="molecule type" value="Genomic_DNA"/>
</dbReference>
<dbReference type="RefSeq" id="WP_019748593.1">
    <property type="nucleotide sequence ID" value="NC_012490.1"/>
</dbReference>
<dbReference type="SMR" id="C1A039"/>
<dbReference type="KEGG" id="rer:RER_32660"/>
<dbReference type="eggNOG" id="COG0061">
    <property type="taxonomic scope" value="Bacteria"/>
</dbReference>
<dbReference type="HOGENOM" id="CLU_008831_0_0_11"/>
<dbReference type="Proteomes" id="UP000002204">
    <property type="component" value="Chromosome"/>
</dbReference>
<dbReference type="GO" id="GO:0005737">
    <property type="term" value="C:cytoplasm"/>
    <property type="evidence" value="ECO:0007669"/>
    <property type="project" value="UniProtKB-SubCell"/>
</dbReference>
<dbReference type="GO" id="GO:0005524">
    <property type="term" value="F:ATP binding"/>
    <property type="evidence" value="ECO:0007669"/>
    <property type="project" value="UniProtKB-KW"/>
</dbReference>
<dbReference type="GO" id="GO:0046872">
    <property type="term" value="F:metal ion binding"/>
    <property type="evidence" value="ECO:0007669"/>
    <property type="project" value="UniProtKB-UniRule"/>
</dbReference>
<dbReference type="GO" id="GO:0051287">
    <property type="term" value="F:NAD binding"/>
    <property type="evidence" value="ECO:0007669"/>
    <property type="project" value="UniProtKB-ARBA"/>
</dbReference>
<dbReference type="GO" id="GO:0003951">
    <property type="term" value="F:NAD+ kinase activity"/>
    <property type="evidence" value="ECO:0007669"/>
    <property type="project" value="UniProtKB-UniRule"/>
</dbReference>
<dbReference type="GO" id="GO:0019674">
    <property type="term" value="P:NAD metabolic process"/>
    <property type="evidence" value="ECO:0007669"/>
    <property type="project" value="InterPro"/>
</dbReference>
<dbReference type="GO" id="GO:0006741">
    <property type="term" value="P:NADP biosynthetic process"/>
    <property type="evidence" value="ECO:0007669"/>
    <property type="project" value="UniProtKB-UniRule"/>
</dbReference>
<dbReference type="FunFam" id="2.60.200.30:FF:000007">
    <property type="entry name" value="NAD kinase"/>
    <property type="match status" value="1"/>
</dbReference>
<dbReference type="Gene3D" id="3.40.50.10330">
    <property type="entry name" value="Probable inorganic polyphosphate/atp-NAD kinase, domain 1"/>
    <property type="match status" value="1"/>
</dbReference>
<dbReference type="Gene3D" id="2.60.200.30">
    <property type="entry name" value="Probable inorganic polyphosphate/atp-NAD kinase, domain 2"/>
    <property type="match status" value="1"/>
</dbReference>
<dbReference type="HAMAP" id="MF_00361">
    <property type="entry name" value="NAD_kinase"/>
    <property type="match status" value="1"/>
</dbReference>
<dbReference type="InterPro" id="IPR017438">
    <property type="entry name" value="ATP-NAD_kinase_N"/>
</dbReference>
<dbReference type="InterPro" id="IPR017437">
    <property type="entry name" value="ATP-NAD_kinase_PpnK-typ_C"/>
</dbReference>
<dbReference type="InterPro" id="IPR016064">
    <property type="entry name" value="NAD/diacylglycerol_kinase_sf"/>
</dbReference>
<dbReference type="InterPro" id="IPR002504">
    <property type="entry name" value="NADK"/>
</dbReference>
<dbReference type="NCBIfam" id="NF002892">
    <property type="entry name" value="PRK03372.1"/>
    <property type="match status" value="1"/>
</dbReference>
<dbReference type="PANTHER" id="PTHR20275">
    <property type="entry name" value="NAD KINASE"/>
    <property type="match status" value="1"/>
</dbReference>
<dbReference type="PANTHER" id="PTHR20275:SF0">
    <property type="entry name" value="NAD KINASE"/>
    <property type="match status" value="1"/>
</dbReference>
<dbReference type="Pfam" id="PF01513">
    <property type="entry name" value="NAD_kinase"/>
    <property type="match status" value="1"/>
</dbReference>
<dbReference type="Pfam" id="PF20143">
    <property type="entry name" value="NAD_kinase_C"/>
    <property type="match status" value="1"/>
</dbReference>
<dbReference type="SUPFAM" id="SSF111331">
    <property type="entry name" value="NAD kinase/diacylglycerol kinase-like"/>
    <property type="match status" value="1"/>
</dbReference>
<accession>C1A039</accession>
<organism>
    <name type="scientific">Rhodococcus erythropolis (strain PR4 / NBRC 100887)</name>
    <dbReference type="NCBI Taxonomy" id="234621"/>
    <lineage>
        <taxon>Bacteria</taxon>
        <taxon>Bacillati</taxon>
        <taxon>Actinomycetota</taxon>
        <taxon>Actinomycetes</taxon>
        <taxon>Mycobacteriales</taxon>
        <taxon>Nocardiaceae</taxon>
        <taxon>Rhodococcus</taxon>
        <taxon>Rhodococcus erythropolis group</taxon>
    </lineage>
</organism>
<keyword id="KW-0067">ATP-binding</keyword>
<keyword id="KW-0963">Cytoplasm</keyword>
<keyword id="KW-0418">Kinase</keyword>
<keyword id="KW-0520">NAD</keyword>
<keyword id="KW-0521">NADP</keyword>
<keyword id="KW-0547">Nucleotide-binding</keyword>
<keyword id="KW-0808">Transferase</keyword>
<gene>
    <name evidence="1" type="primary">nadK</name>
    <name type="ordered locus">RER_32660</name>
</gene>